<organism>
    <name type="scientific">Scilla messeniaca</name>
    <name type="common">Greek squill</name>
    <name type="synonym">Schnarfia messeniaca</name>
    <dbReference type="NCBI Taxonomy" id="82043"/>
    <lineage>
        <taxon>Eukaryota</taxon>
        <taxon>Viridiplantae</taxon>
        <taxon>Streptophyta</taxon>
        <taxon>Embryophyta</taxon>
        <taxon>Tracheophyta</taxon>
        <taxon>Spermatophyta</taxon>
        <taxon>Magnoliopsida</taxon>
        <taxon>Liliopsida</taxon>
        <taxon>Asparagales</taxon>
        <taxon>Hyacinthaceae</taxon>
        <taxon>Hyacinthoideae</taxon>
        <taxon>Hyacintheae</taxon>
        <taxon>Scilla</taxon>
    </lineage>
</organism>
<feature type="chain" id="PRO_0000254523" description="ATP synthase subunit beta, chloroplastic">
    <location>
        <begin position="1"/>
        <end position="495"/>
    </location>
</feature>
<feature type="binding site" evidence="1">
    <location>
        <begin position="172"/>
        <end position="179"/>
    </location>
    <ligand>
        <name>ATP</name>
        <dbReference type="ChEBI" id="CHEBI:30616"/>
    </ligand>
</feature>
<reference key="1">
    <citation type="journal article" date="2003" name="J. Plant Res.">
        <title>Phylogenetic relationships among genera of Massonieae (Hyacinthaceae) inferred from plastid DNA and seed morphology.</title>
        <authorList>
            <person name="Pfosser M.F."/>
            <person name="Wetschnig W."/>
            <person name="Ungar S."/>
            <person name="Prenner G."/>
        </authorList>
    </citation>
    <scope>NUCLEOTIDE SEQUENCE [GENOMIC DNA]</scope>
</reference>
<protein>
    <recommendedName>
        <fullName evidence="1">ATP synthase subunit beta, chloroplastic</fullName>
        <ecNumber evidence="1">7.1.2.2</ecNumber>
    </recommendedName>
    <alternativeName>
        <fullName evidence="1">ATP synthase F1 sector subunit beta</fullName>
    </alternativeName>
    <alternativeName>
        <fullName evidence="1">F-ATPase subunit beta</fullName>
    </alternativeName>
</protein>
<comment type="function">
    <text evidence="1">Produces ATP from ADP in the presence of a proton gradient across the membrane. The catalytic sites are hosted primarily by the beta subunits.</text>
</comment>
<comment type="catalytic activity">
    <reaction evidence="1">
        <text>ATP + H2O + 4 H(+)(in) = ADP + phosphate + 5 H(+)(out)</text>
        <dbReference type="Rhea" id="RHEA:57720"/>
        <dbReference type="ChEBI" id="CHEBI:15377"/>
        <dbReference type="ChEBI" id="CHEBI:15378"/>
        <dbReference type="ChEBI" id="CHEBI:30616"/>
        <dbReference type="ChEBI" id="CHEBI:43474"/>
        <dbReference type="ChEBI" id="CHEBI:456216"/>
        <dbReference type="EC" id="7.1.2.2"/>
    </reaction>
</comment>
<comment type="subunit">
    <text evidence="1">F-type ATPases have 2 components, CF(1) - the catalytic core - and CF(0) - the membrane proton channel. CF(1) has five subunits: alpha(3), beta(3), gamma(1), delta(1), epsilon(1). CF(0) has four main subunits: a(1), b(1), b'(1) and c(9-12).</text>
</comment>
<comment type="subcellular location">
    <subcellularLocation>
        <location evidence="1">Plastid</location>
        <location evidence="1">Chloroplast thylakoid membrane</location>
        <topology evidence="1">Peripheral membrane protein</topology>
    </subcellularLocation>
</comment>
<comment type="similarity">
    <text evidence="1">Belongs to the ATPase alpha/beta chains family.</text>
</comment>
<gene>
    <name evidence="1" type="primary">atpB</name>
</gene>
<evidence type="ECO:0000255" key="1">
    <source>
        <dbReference type="HAMAP-Rule" id="MF_01347"/>
    </source>
</evidence>
<geneLocation type="chloroplast"/>
<name>ATPB_SCIME</name>
<dbReference type="EC" id="7.1.2.2" evidence="1"/>
<dbReference type="EMBL" id="AJ508212">
    <property type="protein sequence ID" value="CAD48409.1"/>
    <property type="molecule type" value="Genomic_DNA"/>
</dbReference>
<dbReference type="SMR" id="Q85V31"/>
<dbReference type="GO" id="GO:0009535">
    <property type="term" value="C:chloroplast thylakoid membrane"/>
    <property type="evidence" value="ECO:0007669"/>
    <property type="project" value="UniProtKB-SubCell"/>
</dbReference>
<dbReference type="GO" id="GO:0005739">
    <property type="term" value="C:mitochondrion"/>
    <property type="evidence" value="ECO:0007669"/>
    <property type="project" value="GOC"/>
</dbReference>
<dbReference type="GO" id="GO:0045259">
    <property type="term" value="C:proton-transporting ATP synthase complex"/>
    <property type="evidence" value="ECO:0007669"/>
    <property type="project" value="UniProtKB-KW"/>
</dbReference>
<dbReference type="GO" id="GO:0005524">
    <property type="term" value="F:ATP binding"/>
    <property type="evidence" value="ECO:0007669"/>
    <property type="project" value="UniProtKB-UniRule"/>
</dbReference>
<dbReference type="GO" id="GO:0016887">
    <property type="term" value="F:ATP hydrolysis activity"/>
    <property type="evidence" value="ECO:0007669"/>
    <property type="project" value="InterPro"/>
</dbReference>
<dbReference type="GO" id="GO:0046933">
    <property type="term" value="F:proton-transporting ATP synthase activity, rotational mechanism"/>
    <property type="evidence" value="ECO:0007669"/>
    <property type="project" value="UniProtKB-UniRule"/>
</dbReference>
<dbReference type="GO" id="GO:0042776">
    <property type="term" value="P:proton motive force-driven mitochondrial ATP synthesis"/>
    <property type="evidence" value="ECO:0007669"/>
    <property type="project" value="TreeGrafter"/>
</dbReference>
<dbReference type="CDD" id="cd18110">
    <property type="entry name" value="ATP-synt_F1_beta_C"/>
    <property type="match status" value="1"/>
</dbReference>
<dbReference type="CDD" id="cd18115">
    <property type="entry name" value="ATP-synt_F1_beta_N"/>
    <property type="match status" value="1"/>
</dbReference>
<dbReference type="CDD" id="cd01133">
    <property type="entry name" value="F1-ATPase_beta_CD"/>
    <property type="match status" value="1"/>
</dbReference>
<dbReference type="FunFam" id="1.10.1140.10:FF:000001">
    <property type="entry name" value="ATP synthase subunit beta"/>
    <property type="match status" value="1"/>
</dbReference>
<dbReference type="FunFam" id="3.40.50.300:FF:000004">
    <property type="entry name" value="ATP synthase subunit beta"/>
    <property type="match status" value="1"/>
</dbReference>
<dbReference type="FunFam" id="2.40.10.170:FF:000002">
    <property type="entry name" value="ATP synthase subunit beta, chloroplastic"/>
    <property type="match status" value="1"/>
</dbReference>
<dbReference type="Gene3D" id="2.40.10.170">
    <property type="match status" value="1"/>
</dbReference>
<dbReference type="Gene3D" id="1.10.1140.10">
    <property type="entry name" value="Bovine Mitochondrial F1-atpase, Atp Synthase Beta Chain, Chain D, domain 3"/>
    <property type="match status" value="1"/>
</dbReference>
<dbReference type="Gene3D" id="3.40.50.300">
    <property type="entry name" value="P-loop containing nucleotide triphosphate hydrolases"/>
    <property type="match status" value="1"/>
</dbReference>
<dbReference type="HAMAP" id="MF_01347">
    <property type="entry name" value="ATP_synth_beta_bact"/>
    <property type="match status" value="1"/>
</dbReference>
<dbReference type="InterPro" id="IPR003593">
    <property type="entry name" value="AAA+_ATPase"/>
</dbReference>
<dbReference type="InterPro" id="IPR055190">
    <property type="entry name" value="ATP-synt_VA_C"/>
</dbReference>
<dbReference type="InterPro" id="IPR005722">
    <property type="entry name" value="ATP_synth_F1_bsu"/>
</dbReference>
<dbReference type="InterPro" id="IPR020003">
    <property type="entry name" value="ATPase_a/bsu_AS"/>
</dbReference>
<dbReference type="InterPro" id="IPR050053">
    <property type="entry name" value="ATPase_alpha/beta_chains"/>
</dbReference>
<dbReference type="InterPro" id="IPR004100">
    <property type="entry name" value="ATPase_F1/V1/A1_a/bsu_N"/>
</dbReference>
<dbReference type="InterPro" id="IPR036121">
    <property type="entry name" value="ATPase_F1/V1/A1_a/bsu_N_sf"/>
</dbReference>
<dbReference type="InterPro" id="IPR000194">
    <property type="entry name" value="ATPase_F1/V1/A1_a/bsu_nucl-bd"/>
</dbReference>
<dbReference type="InterPro" id="IPR024034">
    <property type="entry name" value="ATPase_F1/V1_b/a_C"/>
</dbReference>
<dbReference type="InterPro" id="IPR027417">
    <property type="entry name" value="P-loop_NTPase"/>
</dbReference>
<dbReference type="NCBIfam" id="TIGR01039">
    <property type="entry name" value="atpD"/>
    <property type="match status" value="1"/>
</dbReference>
<dbReference type="PANTHER" id="PTHR15184">
    <property type="entry name" value="ATP SYNTHASE"/>
    <property type="match status" value="1"/>
</dbReference>
<dbReference type="PANTHER" id="PTHR15184:SF71">
    <property type="entry name" value="ATP SYNTHASE SUBUNIT BETA, MITOCHONDRIAL"/>
    <property type="match status" value="1"/>
</dbReference>
<dbReference type="Pfam" id="PF00006">
    <property type="entry name" value="ATP-synt_ab"/>
    <property type="match status" value="1"/>
</dbReference>
<dbReference type="Pfam" id="PF02874">
    <property type="entry name" value="ATP-synt_ab_N"/>
    <property type="match status" value="1"/>
</dbReference>
<dbReference type="Pfam" id="PF22919">
    <property type="entry name" value="ATP-synt_VA_C"/>
    <property type="match status" value="1"/>
</dbReference>
<dbReference type="SMART" id="SM00382">
    <property type="entry name" value="AAA"/>
    <property type="match status" value="1"/>
</dbReference>
<dbReference type="SUPFAM" id="SSF47917">
    <property type="entry name" value="C-terminal domain of alpha and beta subunits of F1 ATP synthase"/>
    <property type="match status" value="1"/>
</dbReference>
<dbReference type="SUPFAM" id="SSF50615">
    <property type="entry name" value="N-terminal domain of alpha and beta subunits of F1 ATP synthase"/>
    <property type="match status" value="1"/>
</dbReference>
<dbReference type="SUPFAM" id="SSF52540">
    <property type="entry name" value="P-loop containing nucleoside triphosphate hydrolases"/>
    <property type="match status" value="1"/>
</dbReference>
<dbReference type="PROSITE" id="PS00152">
    <property type="entry name" value="ATPASE_ALPHA_BETA"/>
    <property type="match status" value="1"/>
</dbReference>
<proteinExistence type="inferred from homology"/>
<sequence length="495" mass="53375">MRINPTTSDSTVSTLEEKNLGRIAQIIGPVLDVVFPPGKMPNIYNALVVKGRDTVGQQINVTCEVQQLLGNNRVRAVAMSATDGLTRGMEVIDTGAALSVPVGGATLGRIFNVLGEPVDNLGPVDTRTTSPIHRSAPAFIQLDTKLSIFETGIKVVDLLAPYRRGGKIGLFGGAGVGKTVLIMELINNIAKAHGGVSVFGGVGERTREGNDLYMEMKESGVINEKNIAESKVALVYGQMNEPPGARMRVGLTALTMAEYFRDVNEQDVLLFIDNIFRFVQAGSEVSALLGRMPSAVGYQPTLSTEMGSLQERITSTKEGSITSIQAVYVPADDLTDPAPATTFAHLDATTVLSRGLAAKGIYPAVDPLDSTSTMLQPRIVGEEHYETAQRVKQTLQRYKELQDIIAILGLDELSEEDRLTVARARKIERFLSQPFFVAEVFTGSPGKYVGLAETIRGFQLILSGELDGLPEQAFYLVGNIDEATAKAMNLEGEKK</sequence>
<keyword id="KW-0066">ATP synthesis</keyword>
<keyword id="KW-0067">ATP-binding</keyword>
<keyword id="KW-0139">CF(1)</keyword>
<keyword id="KW-0150">Chloroplast</keyword>
<keyword id="KW-0375">Hydrogen ion transport</keyword>
<keyword id="KW-0406">Ion transport</keyword>
<keyword id="KW-0472">Membrane</keyword>
<keyword id="KW-0547">Nucleotide-binding</keyword>
<keyword id="KW-0934">Plastid</keyword>
<keyword id="KW-0793">Thylakoid</keyword>
<keyword id="KW-1278">Translocase</keyword>
<keyword id="KW-0813">Transport</keyword>
<accession>Q85V31</accession>